<gene>
    <name evidence="2" type="primary">tufA</name>
    <name type="ordered locus">glr3928</name>
</gene>
<accession>P50064</accession>
<keyword id="KW-0963">Cytoplasm</keyword>
<keyword id="KW-0251">Elongation factor</keyword>
<keyword id="KW-0342">GTP-binding</keyword>
<keyword id="KW-0378">Hydrolase</keyword>
<keyword id="KW-0460">Magnesium</keyword>
<keyword id="KW-0479">Metal-binding</keyword>
<keyword id="KW-0547">Nucleotide-binding</keyword>
<keyword id="KW-0648">Protein biosynthesis</keyword>
<keyword id="KW-1185">Reference proteome</keyword>
<sequence>MARAKFERNKPHVNIGTIGHVDHGKTTLTAAITMTLAALGRAKAKKYDEIDQAPEEKARGITINTAHVEYETEKRHYAHVDCPGHADYVKNMITGAAQMDGAILVVSAADGPMPQTREHILLARQVGVPNIVVFLNKKDQLDDPELLELVELEVRELLSKYDFPGDDVPIVAGSALMALEKMASEPKLIRGKDDWVDCIYSLMDAVDAYIPTPERAIDKPFLMAVEDVFSITGRGTVATGRIERGKVKVGETIELVGIRGTRSTTVTGLEMFQKSLDEGLAGDNIGVLLRGIKKEDVERGMVLAKPGSITPHTQFEGEVYILSKEEGGRHTPFFAGYRPQFYVRTTDVTGTIVTFTDDEGKSAEMVMPGDRIKMTVELINPIAIEDGMRFAIREGGRTVGAGVVSKILK</sequence>
<dbReference type="EC" id="3.6.5.3" evidence="2"/>
<dbReference type="EMBL" id="BA000045">
    <property type="protein sequence ID" value="BAC91869.1"/>
    <property type="molecule type" value="Genomic_DNA"/>
</dbReference>
<dbReference type="EMBL" id="U09433">
    <property type="protein sequence ID" value="AAA87693.1"/>
    <property type="molecule type" value="Genomic_DNA"/>
</dbReference>
<dbReference type="RefSeq" id="NP_926874.1">
    <property type="nucleotide sequence ID" value="NC_005125.1"/>
</dbReference>
<dbReference type="RefSeq" id="WP_011143916.1">
    <property type="nucleotide sequence ID" value="NC_005125.1"/>
</dbReference>
<dbReference type="SMR" id="P50064"/>
<dbReference type="FunCoup" id="P50064">
    <property type="interactions" value="347"/>
</dbReference>
<dbReference type="STRING" id="251221.gene:10761445"/>
<dbReference type="EnsemblBacteria" id="BAC91869">
    <property type="protein sequence ID" value="BAC91869"/>
    <property type="gene ID" value="BAC91869"/>
</dbReference>
<dbReference type="KEGG" id="gvi:glr3928"/>
<dbReference type="PATRIC" id="fig|251221.4.peg.3961"/>
<dbReference type="eggNOG" id="COG0050">
    <property type="taxonomic scope" value="Bacteria"/>
</dbReference>
<dbReference type="HOGENOM" id="CLU_007265_0_1_3"/>
<dbReference type="InParanoid" id="P50064"/>
<dbReference type="OrthoDB" id="9804504at2"/>
<dbReference type="PhylomeDB" id="P50064"/>
<dbReference type="Proteomes" id="UP000000557">
    <property type="component" value="Chromosome"/>
</dbReference>
<dbReference type="GO" id="GO:0005737">
    <property type="term" value="C:cytoplasm"/>
    <property type="evidence" value="ECO:0007669"/>
    <property type="project" value="UniProtKB-SubCell"/>
</dbReference>
<dbReference type="GO" id="GO:0005525">
    <property type="term" value="F:GTP binding"/>
    <property type="evidence" value="ECO:0007669"/>
    <property type="project" value="UniProtKB-UniRule"/>
</dbReference>
<dbReference type="GO" id="GO:0003924">
    <property type="term" value="F:GTPase activity"/>
    <property type="evidence" value="ECO:0007669"/>
    <property type="project" value="InterPro"/>
</dbReference>
<dbReference type="GO" id="GO:0003746">
    <property type="term" value="F:translation elongation factor activity"/>
    <property type="evidence" value="ECO:0000318"/>
    <property type="project" value="GO_Central"/>
</dbReference>
<dbReference type="GO" id="GO:0006414">
    <property type="term" value="P:translational elongation"/>
    <property type="evidence" value="ECO:0000318"/>
    <property type="project" value="GO_Central"/>
</dbReference>
<dbReference type="CDD" id="cd01884">
    <property type="entry name" value="EF_Tu"/>
    <property type="match status" value="1"/>
</dbReference>
<dbReference type="CDD" id="cd03697">
    <property type="entry name" value="EFTU_II"/>
    <property type="match status" value="1"/>
</dbReference>
<dbReference type="CDD" id="cd03707">
    <property type="entry name" value="EFTU_III"/>
    <property type="match status" value="1"/>
</dbReference>
<dbReference type="FunFam" id="2.40.30.10:FF:000001">
    <property type="entry name" value="Elongation factor Tu"/>
    <property type="match status" value="1"/>
</dbReference>
<dbReference type="FunFam" id="2.40.30.10:FF:000046">
    <property type="entry name" value="Elongation factor Tu"/>
    <property type="match status" value="1"/>
</dbReference>
<dbReference type="FunFam" id="3.40.50.300:FF:000003">
    <property type="entry name" value="Elongation factor Tu"/>
    <property type="match status" value="1"/>
</dbReference>
<dbReference type="Gene3D" id="3.40.50.300">
    <property type="entry name" value="P-loop containing nucleotide triphosphate hydrolases"/>
    <property type="match status" value="1"/>
</dbReference>
<dbReference type="Gene3D" id="2.40.30.10">
    <property type="entry name" value="Translation factors"/>
    <property type="match status" value="2"/>
</dbReference>
<dbReference type="HAMAP" id="MF_00118_B">
    <property type="entry name" value="EF_Tu_B"/>
    <property type="match status" value="1"/>
</dbReference>
<dbReference type="InterPro" id="IPR041709">
    <property type="entry name" value="EF-Tu_GTP-bd"/>
</dbReference>
<dbReference type="InterPro" id="IPR050055">
    <property type="entry name" value="EF-Tu_GTPase"/>
</dbReference>
<dbReference type="InterPro" id="IPR004161">
    <property type="entry name" value="EFTu-like_2"/>
</dbReference>
<dbReference type="InterPro" id="IPR033720">
    <property type="entry name" value="EFTU_2"/>
</dbReference>
<dbReference type="InterPro" id="IPR031157">
    <property type="entry name" value="G_TR_CS"/>
</dbReference>
<dbReference type="InterPro" id="IPR027417">
    <property type="entry name" value="P-loop_NTPase"/>
</dbReference>
<dbReference type="InterPro" id="IPR005225">
    <property type="entry name" value="Small_GTP-bd"/>
</dbReference>
<dbReference type="InterPro" id="IPR000795">
    <property type="entry name" value="T_Tr_GTP-bd_dom"/>
</dbReference>
<dbReference type="InterPro" id="IPR009000">
    <property type="entry name" value="Transl_B-barrel_sf"/>
</dbReference>
<dbReference type="InterPro" id="IPR009001">
    <property type="entry name" value="Transl_elong_EF1A/Init_IF2_C"/>
</dbReference>
<dbReference type="InterPro" id="IPR004541">
    <property type="entry name" value="Transl_elong_EFTu/EF1A_bac/org"/>
</dbReference>
<dbReference type="InterPro" id="IPR004160">
    <property type="entry name" value="Transl_elong_EFTu/EF1A_C"/>
</dbReference>
<dbReference type="NCBIfam" id="TIGR00485">
    <property type="entry name" value="EF-Tu"/>
    <property type="match status" value="1"/>
</dbReference>
<dbReference type="NCBIfam" id="NF000766">
    <property type="entry name" value="PRK00049.1"/>
    <property type="match status" value="1"/>
</dbReference>
<dbReference type="NCBIfam" id="NF009372">
    <property type="entry name" value="PRK12735.1"/>
    <property type="match status" value="1"/>
</dbReference>
<dbReference type="NCBIfam" id="NF009373">
    <property type="entry name" value="PRK12736.1"/>
    <property type="match status" value="1"/>
</dbReference>
<dbReference type="NCBIfam" id="TIGR00231">
    <property type="entry name" value="small_GTP"/>
    <property type="match status" value="1"/>
</dbReference>
<dbReference type="PANTHER" id="PTHR43721:SF22">
    <property type="entry name" value="ELONGATION FACTOR TU, MITOCHONDRIAL"/>
    <property type="match status" value="1"/>
</dbReference>
<dbReference type="PANTHER" id="PTHR43721">
    <property type="entry name" value="ELONGATION FACTOR TU-RELATED"/>
    <property type="match status" value="1"/>
</dbReference>
<dbReference type="Pfam" id="PF00009">
    <property type="entry name" value="GTP_EFTU"/>
    <property type="match status" value="1"/>
</dbReference>
<dbReference type="Pfam" id="PF03144">
    <property type="entry name" value="GTP_EFTU_D2"/>
    <property type="match status" value="1"/>
</dbReference>
<dbReference type="Pfam" id="PF03143">
    <property type="entry name" value="GTP_EFTU_D3"/>
    <property type="match status" value="1"/>
</dbReference>
<dbReference type="PRINTS" id="PR00315">
    <property type="entry name" value="ELONGATNFCT"/>
</dbReference>
<dbReference type="SUPFAM" id="SSF50465">
    <property type="entry name" value="EF-Tu/eEF-1alpha/eIF2-gamma C-terminal domain"/>
    <property type="match status" value="1"/>
</dbReference>
<dbReference type="SUPFAM" id="SSF52540">
    <property type="entry name" value="P-loop containing nucleoside triphosphate hydrolases"/>
    <property type="match status" value="1"/>
</dbReference>
<dbReference type="SUPFAM" id="SSF50447">
    <property type="entry name" value="Translation proteins"/>
    <property type="match status" value="1"/>
</dbReference>
<dbReference type="PROSITE" id="PS00301">
    <property type="entry name" value="G_TR_1"/>
    <property type="match status" value="1"/>
</dbReference>
<dbReference type="PROSITE" id="PS51722">
    <property type="entry name" value="G_TR_2"/>
    <property type="match status" value="1"/>
</dbReference>
<organism>
    <name type="scientific">Gloeobacter violaceus (strain ATCC 29082 / PCC 7421)</name>
    <dbReference type="NCBI Taxonomy" id="251221"/>
    <lineage>
        <taxon>Bacteria</taxon>
        <taxon>Bacillati</taxon>
        <taxon>Cyanobacteriota</taxon>
        <taxon>Cyanophyceae</taxon>
        <taxon>Gloeobacterales</taxon>
        <taxon>Gloeobacteraceae</taxon>
        <taxon>Gloeobacter</taxon>
    </lineage>
</organism>
<proteinExistence type="inferred from homology"/>
<protein>
    <recommendedName>
        <fullName evidence="2">Elongation factor Tu</fullName>
        <shortName evidence="2">EF-Tu</shortName>
        <ecNumber evidence="2">3.6.5.3</ecNumber>
    </recommendedName>
</protein>
<reference key="1">
    <citation type="journal article" date="2003" name="DNA Res.">
        <title>Complete genome structure of Gloeobacter violaceus PCC 7421, a cyanobacterium that lacks thylakoids.</title>
        <authorList>
            <person name="Nakamura Y."/>
            <person name="Kaneko T."/>
            <person name="Sato S."/>
            <person name="Mimuro M."/>
            <person name="Miyashita H."/>
            <person name="Tsuchiya T."/>
            <person name="Sasamoto S."/>
            <person name="Watanabe A."/>
            <person name="Kawashima K."/>
            <person name="Kishida Y."/>
            <person name="Kiyokawa C."/>
            <person name="Kohara M."/>
            <person name="Matsumoto M."/>
            <person name="Matsuno A."/>
            <person name="Nakazaki N."/>
            <person name="Shimpo S."/>
            <person name="Takeuchi C."/>
            <person name="Yamada M."/>
            <person name="Tabata S."/>
        </authorList>
    </citation>
    <scope>NUCLEOTIDE SEQUENCE [LARGE SCALE GENOMIC DNA]</scope>
    <source>
        <strain>ATCC 29082 / PCC 7421</strain>
    </source>
</reference>
<reference key="2">
    <citation type="journal article" date="1995" name="Mol. Phylogenet. Evol.">
        <title>Phylogenetic analysis of tufA sequences indicates a cyanobacterial origin of all plastids.</title>
        <authorList>
            <person name="Delwiche C.F."/>
            <person name="Kuhsel M."/>
            <person name="Palmer J.D."/>
        </authorList>
    </citation>
    <scope>NUCLEOTIDE SEQUENCE [GENOMIC DNA] OF 90-324</scope>
    <source>
        <strain>ATCC 29082 / PCC 7421</strain>
    </source>
</reference>
<feature type="chain" id="PRO_0000091330" description="Elongation factor Tu">
    <location>
        <begin position="1"/>
        <end position="409"/>
    </location>
</feature>
<feature type="domain" description="tr-type G">
    <location>
        <begin position="10"/>
        <end position="214"/>
    </location>
</feature>
<feature type="region of interest" description="G1" evidence="1">
    <location>
        <begin position="19"/>
        <end position="26"/>
    </location>
</feature>
<feature type="region of interest" description="G2" evidence="1">
    <location>
        <begin position="60"/>
        <end position="64"/>
    </location>
</feature>
<feature type="region of interest" description="G3" evidence="1">
    <location>
        <begin position="81"/>
        <end position="84"/>
    </location>
</feature>
<feature type="region of interest" description="G4" evidence="1">
    <location>
        <begin position="136"/>
        <end position="139"/>
    </location>
</feature>
<feature type="region of interest" description="G5" evidence="1">
    <location>
        <begin position="174"/>
        <end position="176"/>
    </location>
</feature>
<feature type="binding site" evidence="2">
    <location>
        <begin position="19"/>
        <end position="26"/>
    </location>
    <ligand>
        <name>GTP</name>
        <dbReference type="ChEBI" id="CHEBI:37565"/>
    </ligand>
</feature>
<feature type="binding site" evidence="2">
    <location>
        <position position="26"/>
    </location>
    <ligand>
        <name>Mg(2+)</name>
        <dbReference type="ChEBI" id="CHEBI:18420"/>
    </ligand>
</feature>
<feature type="binding site" evidence="2">
    <location>
        <begin position="81"/>
        <end position="85"/>
    </location>
    <ligand>
        <name>GTP</name>
        <dbReference type="ChEBI" id="CHEBI:37565"/>
    </ligand>
</feature>
<feature type="binding site" evidence="2">
    <location>
        <begin position="136"/>
        <end position="139"/>
    </location>
    <ligand>
        <name>GTP</name>
        <dbReference type="ChEBI" id="CHEBI:37565"/>
    </ligand>
</feature>
<feature type="sequence conflict" description="In Ref. 2; AAA87693." evidence="3" ref="2">
    <location>
        <position position="158"/>
    </location>
</feature>
<feature type="sequence conflict" description="In Ref. 2; AAA87693." evidence="3" ref="2">
    <original>VFSITG</original>
    <variation>LLVSR</variation>
    <location>
        <begin position="228"/>
        <end position="233"/>
    </location>
</feature>
<feature type="sequence conflict" description="In Ref. 2; AAA87693." evidence="3" ref="2">
    <location>
        <position position="240"/>
    </location>
</feature>
<feature type="sequence conflict" description="In Ref. 2." evidence="3" ref="2">
    <original>GTRST</original>
    <variation>TRS</variation>
    <location>
        <begin position="260"/>
        <end position="264"/>
    </location>
</feature>
<feature type="sequence conflict" description="In Ref. 2; AAA87693." evidence="3" ref="2">
    <location>
        <position position="274"/>
    </location>
</feature>
<comment type="function">
    <text evidence="2">GTP hydrolase that promotes the GTP-dependent binding of aminoacyl-tRNA to the A-site of ribosomes during protein biosynthesis.</text>
</comment>
<comment type="catalytic activity">
    <reaction evidence="2">
        <text>GTP + H2O = GDP + phosphate + H(+)</text>
        <dbReference type="Rhea" id="RHEA:19669"/>
        <dbReference type="ChEBI" id="CHEBI:15377"/>
        <dbReference type="ChEBI" id="CHEBI:15378"/>
        <dbReference type="ChEBI" id="CHEBI:37565"/>
        <dbReference type="ChEBI" id="CHEBI:43474"/>
        <dbReference type="ChEBI" id="CHEBI:58189"/>
        <dbReference type="EC" id="3.6.5.3"/>
    </reaction>
    <physiologicalReaction direction="left-to-right" evidence="2">
        <dbReference type="Rhea" id="RHEA:19670"/>
    </physiologicalReaction>
</comment>
<comment type="subunit">
    <text evidence="2">Monomer.</text>
</comment>
<comment type="subcellular location">
    <subcellularLocation>
        <location evidence="2">Cytoplasm</location>
    </subcellularLocation>
</comment>
<comment type="similarity">
    <text evidence="2">Belongs to the TRAFAC class translation factor GTPase superfamily. Classic translation factor GTPase family. EF-Tu/EF-1A subfamily.</text>
</comment>
<name>EFTU_GLOVI</name>
<evidence type="ECO:0000250" key="1"/>
<evidence type="ECO:0000255" key="2">
    <source>
        <dbReference type="HAMAP-Rule" id="MF_00118"/>
    </source>
</evidence>
<evidence type="ECO:0000305" key="3"/>